<comment type="function">
    <text evidence="2">Involved in the biodegradation of nitroaromatic and chlorinated nitroaromatic compounds. Catalyzes the conversion of 2-amino-5-chloromuconic acid into 2-hydroxy-5-chloromuconic acid and ammonia. Also able to catalyze the transformation of 2-aminomuconic acid into 2-hydroxymuconic acid.</text>
</comment>
<comment type="catalytic activity">
    <reaction evidence="2">
        <text>(2Z,4E)-2-aminomuconate + H2O = (3E)-2-oxohex-3-enedioate + NH4(+)</text>
        <dbReference type="Rhea" id="RHEA:20996"/>
        <dbReference type="ChEBI" id="CHEBI:15377"/>
        <dbReference type="ChEBI" id="CHEBI:28938"/>
        <dbReference type="ChEBI" id="CHEBI:64908"/>
        <dbReference type="ChEBI" id="CHEBI:77859"/>
        <dbReference type="EC" id="3.5.99.5"/>
    </reaction>
</comment>
<comment type="pathway">
    <text evidence="5">Xenobiotic degradation; nitrobenzene degradation.</text>
</comment>
<comment type="pathway">
    <text evidence="5">Xenobiotic degradation; 4-chloronitrobenzene degradation.</text>
</comment>
<comment type="similarity">
    <text evidence="4">Belongs to the amidase family.</text>
</comment>
<dbReference type="EC" id="3.5.99.5" evidence="2"/>
<dbReference type="EMBL" id="EF079106">
    <property type="protein sequence ID" value="ABB13583.2"/>
    <property type="molecule type" value="Genomic_DNA"/>
</dbReference>
<dbReference type="RefSeq" id="WP_008328889.1">
    <property type="nucleotide sequence ID" value="NC_016978.1"/>
</dbReference>
<dbReference type="RefSeq" id="YP_001967690.1">
    <property type="nucleotide sequence ID" value="NC_010935.1"/>
</dbReference>
<dbReference type="RefSeq" id="YP_005352119.1">
    <property type="nucleotide sequence ID" value="NC_016978.1"/>
</dbReference>
<dbReference type="SMR" id="Q38M35"/>
<dbReference type="PATRIC" id="fig|688245.4.peg.44"/>
<dbReference type="UniPathway" id="UPA00923"/>
<dbReference type="UniPathway" id="UPA01033"/>
<dbReference type="GO" id="GO:0050540">
    <property type="term" value="F:2-aminomuconate deaminase activity"/>
    <property type="evidence" value="ECO:0007669"/>
    <property type="project" value="UniProtKB-EC"/>
</dbReference>
<dbReference type="GO" id="GO:0009056">
    <property type="term" value="P:catabolic process"/>
    <property type="evidence" value="ECO:0007669"/>
    <property type="project" value="UniProtKB-KW"/>
</dbReference>
<dbReference type="Gene3D" id="3.90.1300.10">
    <property type="entry name" value="Amidase signature (AS) domain"/>
    <property type="match status" value="1"/>
</dbReference>
<dbReference type="InterPro" id="IPR000120">
    <property type="entry name" value="Amidase"/>
</dbReference>
<dbReference type="InterPro" id="IPR023631">
    <property type="entry name" value="Amidase_dom"/>
</dbReference>
<dbReference type="InterPro" id="IPR036928">
    <property type="entry name" value="AS_sf"/>
</dbReference>
<dbReference type="PANTHER" id="PTHR11895:SF7">
    <property type="entry name" value="GLUTAMYL-TRNA(GLN) AMIDOTRANSFERASE SUBUNIT A, MITOCHONDRIAL"/>
    <property type="match status" value="1"/>
</dbReference>
<dbReference type="PANTHER" id="PTHR11895">
    <property type="entry name" value="TRANSAMIDASE"/>
    <property type="match status" value="1"/>
</dbReference>
<dbReference type="Pfam" id="PF01425">
    <property type="entry name" value="Amidase"/>
    <property type="match status" value="1"/>
</dbReference>
<dbReference type="SUPFAM" id="SSF75304">
    <property type="entry name" value="Amidase signature (AS) enzymes"/>
    <property type="match status" value="1"/>
</dbReference>
<reference key="1">
    <citation type="journal article" date="2005" name="Arch. Microbiol.">
        <title>A novel 2-aminophenol 1,6-dioxygenase involved in the degradation of p-chloronitrobenzene by Comamonas strain CNB-1: purification, properties, genetic cloning and expression in Escherichia coli.</title>
        <authorList>
            <person name="Wu J.F."/>
            <person name="Sun C.W."/>
            <person name="Jiang C.Y."/>
            <person name="Liu Z.P."/>
            <person name="Liu S.J."/>
        </authorList>
    </citation>
    <scope>NUCLEOTIDE SEQUENCE [GENOMIC DNA]</scope>
    <source>
        <strain>CNB-1</strain>
        <plasmid evidence="6">pCNB</plasmid>
    </source>
</reference>
<reference key="2">
    <citation type="journal article" date="2006" name="Appl. Environ. Microbiol.">
        <title>Novel partial reductive pathway for 4-chloronitrobenzene and nitrobenzene degradation in Comamonas sp. strain CNB-1.</title>
        <authorList>
            <person name="Wu J.F."/>
            <person name="Jiang C.Y."/>
            <person name="Wang B.J."/>
            <person name="Ma Y.F."/>
            <person name="Liu Z.P."/>
            <person name="Liu S.J."/>
        </authorList>
    </citation>
    <scope>NUCLEOTIDE SEQUENCE [GENOMIC DNA]</scope>
    <scope>FUNCTION</scope>
    <scope>CATALYTIC ACTIVITY</scope>
    <scope>PATHWAY</scope>
    <source>
        <strain>CNB-1</strain>
        <plasmid evidence="6">pCNB</plasmid>
    </source>
</reference>
<reference key="3">
    <citation type="journal article" date="2007" name="Appl. Environ. Microbiol.">
        <title>Nucleotide sequence of plasmid pCNB1 from Comamonas strain CNB-1 reveals novel genetic organization and evolution for 4-chloronitrobenzene degradation.</title>
        <authorList>
            <person name="Ma Y.F."/>
            <person name="Wu J.F."/>
            <person name="Wang S.Y."/>
            <person name="Jiang C.Y."/>
            <person name="Zhang Y."/>
            <person name="Qi S.W."/>
            <person name="Liu L."/>
            <person name="Zhao G.P."/>
            <person name="Liu S.J."/>
        </authorList>
    </citation>
    <scope>NUCLEOTIDE SEQUENCE [GENOMIC DNA]</scope>
    <source>
        <strain>CNB-1</strain>
        <plasmid evidence="6">pCNB</plasmid>
    </source>
</reference>
<keyword id="KW-0058">Aromatic hydrocarbons catabolism</keyword>
<keyword id="KW-0378">Hydrolase</keyword>
<keyword id="KW-0614">Plasmid</keyword>
<evidence type="ECO:0000250" key="1">
    <source>
        <dbReference type="UniProtKB" id="B9LZ18"/>
    </source>
</evidence>
<evidence type="ECO:0000269" key="2">
    <source>
    </source>
</evidence>
<evidence type="ECO:0000303" key="3">
    <source>
    </source>
</evidence>
<evidence type="ECO:0000305" key="4"/>
<evidence type="ECO:0000305" key="5">
    <source>
    </source>
</evidence>
<evidence type="ECO:0000312" key="6">
    <source>
        <dbReference type="EMBL" id="ABB13583.2"/>
    </source>
</evidence>
<feature type="chain" id="PRO_0000441896" description="2-amino-5-chloromuconic acid deaminase">
    <location>
        <begin position="1"/>
        <end position="462"/>
    </location>
</feature>
<feature type="active site" description="Charge relay system" evidence="1">
    <location>
        <position position="79"/>
    </location>
</feature>
<feature type="active site" description="Charge relay system" evidence="1">
    <location>
        <position position="156"/>
    </location>
</feature>
<feature type="active site" description="Acyl-ester intermediate" evidence="1">
    <location>
        <position position="180"/>
    </location>
</feature>
<name>CNBH_COMTE</name>
<accession>Q38M35</accession>
<protein>
    <recommendedName>
        <fullName evidence="3">2-amino-5-chloromuconic acid deaminase</fullName>
    </recommendedName>
    <alternativeName>
        <fullName evidence="3">2-aminomuconate deaminase</fullName>
        <ecNumber evidence="2">3.5.99.5</ecNumber>
    </alternativeName>
</protein>
<organism>
    <name type="scientific">Comamonas testosteroni</name>
    <name type="common">Pseudomonas testosteroni</name>
    <dbReference type="NCBI Taxonomy" id="285"/>
    <lineage>
        <taxon>Bacteria</taxon>
        <taxon>Pseudomonadati</taxon>
        <taxon>Pseudomonadota</taxon>
        <taxon>Betaproteobacteria</taxon>
        <taxon>Burkholderiales</taxon>
        <taxon>Comamonadaceae</taxon>
        <taxon>Comamonas</taxon>
    </lineage>
</organism>
<gene>
    <name evidence="3" type="primary">cnbH</name>
</gene>
<proteinExistence type="evidence at protein level"/>
<geneLocation type="plasmid" evidence="6">
    <name>pCNB</name>
</geneLocation>
<sequence>MNAAHLSLAEHAARLRRRELTAVALIDTCAQHHARMEPRLNAYKTWDGARARSAAAAVDTLLDQGQDLGPLMGLPVSVKDLYGVPGLPVFAGSDEALPEAWQAAGPLVARLQRQLGIVVGKTHTVEFAFGGLGVNAHWGTPRNPWSPHEHRVPGGSSAGAGVSLVQGSALLALGTDTAGSVRVPASMTGQVGLKTTVGRWPVEGIVPLSSSLDTAGVLTRTVEDLAYAFAALDTESQGLPAPAPVRVQGLRVGVPTNHFWDDIDPSIAAAVEAAVQRLAQAGAQVVRFPLPHCEEAFDIFRRGGLAASELAAYLDQHFPHKVERLDPVVRDRVRWAEQVSSVEYLRRKAVLQRCGAGAARLFDDVDVLLTPTVPASPPRLADIGTVETYAPANMKAMRNTAISNLFGWCALTMPVGLDANRMPVGLQLMGPPRAEARLIGIALGIEALIGQGHALLGAPDLP</sequence>